<accession>Q4FPY8</accession>
<proteinExistence type="inferred from homology"/>
<comment type="function">
    <text evidence="1">Catalyzes the last two sequential reactions in the de novo biosynthetic pathway for UDP-N-acetylglucosamine (UDP-GlcNAc). The C-terminal domain catalyzes the transfer of acetyl group from acetyl coenzyme A to glucosamine-1-phosphate (GlcN-1-P) to produce N-acetylglucosamine-1-phosphate (GlcNAc-1-P), which is converted into UDP-GlcNAc by the transfer of uridine 5-monophosphate (from uridine 5-triphosphate), a reaction catalyzed by the N-terminal domain.</text>
</comment>
<comment type="catalytic activity">
    <reaction evidence="1">
        <text>alpha-D-glucosamine 1-phosphate + acetyl-CoA = N-acetyl-alpha-D-glucosamine 1-phosphate + CoA + H(+)</text>
        <dbReference type="Rhea" id="RHEA:13725"/>
        <dbReference type="ChEBI" id="CHEBI:15378"/>
        <dbReference type="ChEBI" id="CHEBI:57287"/>
        <dbReference type="ChEBI" id="CHEBI:57288"/>
        <dbReference type="ChEBI" id="CHEBI:57776"/>
        <dbReference type="ChEBI" id="CHEBI:58516"/>
        <dbReference type="EC" id="2.3.1.157"/>
    </reaction>
</comment>
<comment type="catalytic activity">
    <reaction evidence="1">
        <text>N-acetyl-alpha-D-glucosamine 1-phosphate + UTP + H(+) = UDP-N-acetyl-alpha-D-glucosamine + diphosphate</text>
        <dbReference type="Rhea" id="RHEA:13509"/>
        <dbReference type="ChEBI" id="CHEBI:15378"/>
        <dbReference type="ChEBI" id="CHEBI:33019"/>
        <dbReference type="ChEBI" id="CHEBI:46398"/>
        <dbReference type="ChEBI" id="CHEBI:57705"/>
        <dbReference type="ChEBI" id="CHEBI:57776"/>
        <dbReference type="EC" id="2.7.7.23"/>
    </reaction>
</comment>
<comment type="cofactor">
    <cofactor evidence="1">
        <name>Mg(2+)</name>
        <dbReference type="ChEBI" id="CHEBI:18420"/>
    </cofactor>
    <text evidence="1">Binds 1 Mg(2+) ion per subunit.</text>
</comment>
<comment type="pathway">
    <text evidence="1">Nucleotide-sugar biosynthesis; UDP-N-acetyl-alpha-D-glucosamine biosynthesis; N-acetyl-alpha-D-glucosamine 1-phosphate from alpha-D-glucosamine 6-phosphate (route II): step 2/2.</text>
</comment>
<comment type="pathway">
    <text evidence="1">Nucleotide-sugar biosynthesis; UDP-N-acetyl-alpha-D-glucosamine biosynthesis; UDP-N-acetyl-alpha-D-glucosamine from N-acetyl-alpha-D-glucosamine 1-phosphate: step 1/1.</text>
</comment>
<comment type="pathway">
    <text evidence="1">Bacterial outer membrane biogenesis; LPS lipid A biosynthesis.</text>
</comment>
<comment type="subunit">
    <text evidence="1">Homotrimer.</text>
</comment>
<comment type="subcellular location">
    <subcellularLocation>
        <location evidence="1">Cytoplasm</location>
    </subcellularLocation>
</comment>
<comment type="similarity">
    <text evidence="1">In the N-terminal section; belongs to the N-acetylglucosamine-1-phosphate uridyltransferase family.</text>
</comment>
<comment type="similarity">
    <text evidence="1">In the C-terminal section; belongs to the transferase hexapeptide repeat family.</text>
</comment>
<dbReference type="EC" id="2.7.7.23" evidence="1"/>
<dbReference type="EC" id="2.3.1.157" evidence="1"/>
<dbReference type="EMBL" id="CP000082">
    <property type="protein sequence ID" value="AAZ19920.1"/>
    <property type="molecule type" value="Genomic_DNA"/>
</dbReference>
<dbReference type="RefSeq" id="WP_011281327.1">
    <property type="nucleotide sequence ID" value="NC_007204.1"/>
</dbReference>
<dbReference type="SMR" id="Q4FPY8"/>
<dbReference type="STRING" id="259536.Psyc_2073"/>
<dbReference type="KEGG" id="par:Psyc_2073"/>
<dbReference type="eggNOG" id="COG1207">
    <property type="taxonomic scope" value="Bacteria"/>
</dbReference>
<dbReference type="HOGENOM" id="CLU_029499_15_2_6"/>
<dbReference type="OrthoDB" id="9775031at2"/>
<dbReference type="UniPathway" id="UPA00113">
    <property type="reaction ID" value="UER00532"/>
</dbReference>
<dbReference type="UniPathway" id="UPA00113">
    <property type="reaction ID" value="UER00533"/>
</dbReference>
<dbReference type="UniPathway" id="UPA00973"/>
<dbReference type="Proteomes" id="UP000000546">
    <property type="component" value="Chromosome"/>
</dbReference>
<dbReference type="GO" id="GO:0005737">
    <property type="term" value="C:cytoplasm"/>
    <property type="evidence" value="ECO:0007669"/>
    <property type="project" value="UniProtKB-SubCell"/>
</dbReference>
<dbReference type="GO" id="GO:0016020">
    <property type="term" value="C:membrane"/>
    <property type="evidence" value="ECO:0007669"/>
    <property type="project" value="GOC"/>
</dbReference>
<dbReference type="GO" id="GO:0019134">
    <property type="term" value="F:glucosamine-1-phosphate N-acetyltransferase activity"/>
    <property type="evidence" value="ECO:0007669"/>
    <property type="project" value="UniProtKB-UniRule"/>
</dbReference>
<dbReference type="GO" id="GO:0000287">
    <property type="term" value="F:magnesium ion binding"/>
    <property type="evidence" value="ECO:0007669"/>
    <property type="project" value="UniProtKB-UniRule"/>
</dbReference>
<dbReference type="GO" id="GO:0003977">
    <property type="term" value="F:UDP-N-acetylglucosamine diphosphorylase activity"/>
    <property type="evidence" value="ECO:0007669"/>
    <property type="project" value="UniProtKB-UniRule"/>
</dbReference>
<dbReference type="GO" id="GO:0000902">
    <property type="term" value="P:cell morphogenesis"/>
    <property type="evidence" value="ECO:0007669"/>
    <property type="project" value="UniProtKB-UniRule"/>
</dbReference>
<dbReference type="GO" id="GO:0071555">
    <property type="term" value="P:cell wall organization"/>
    <property type="evidence" value="ECO:0007669"/>
    <property type="project" value="UniProtKB-KW"/>
</dbReference>
<dbReference type="GO" id="GO:0009245">
    <property type="term" value="P:lipid A biosynthetic process"/>
    <property type="evidence" value="ECO:0007669"/>
    <property type="project" value="UniProtKB-UniRule"/>
</dbReference>
<dbReference type="GO" id="GO:0009252">
    <property type="term" value="P:peptidoglycan biosynthetic process"/>
    <property type="evidence" value="ECO:0007669"/>
    <property type="project" value="UniProtKB-UniRule"/>
</dbReference>
<dbReference type="GO" id="GO:0008360">
    <property type="term" value="P:regulation of cell shape"/>
    <property type="evidence" value="ECO:0007669"/>
    <property type="project" value="UniProtKB-KW"/>
</dbReference>
<dbReference type="GO" id="GO:0006048">
    <property type="term" value="P:UDP-N-acetylglucosamine biosynthetic process"/>
    <property type="evidence" value="ECO:0007669"/>
    <property type="project" value="UniProtKB-UniPathway"/>
</dbReference>
<dbReference type="CDD" id="cd02540">
    <property type="entry name" value="GT2_GlmU_N_bac"/>
    <property type="match status" value="1"/>
</dbReference>
<dbReference type="CDD" id="cd03353">
    <property type="entry name" value="LbH_GlmU_C"/>
    <property type="match status" value="1"/>
</dbReference>
<dbReference type="Gene3D" id="2.160.10.10">
    <property type="entry name" value="Hexapeptide repeat proteins"/>
    <property type="match status" value="1"/>
</dbReference>
<dbReference type="Gene3D" id="3.90.550.10">
    <property type="entry name" value="Spore Coat Polysaccharide Biosynthesis Protein SpsA, Chain A"/>
    <property type="match status" value="1"/>
</dbReference>
<dbReference type="HAMAP" id="MF_01631">
    <property type="entry name" value="GlmU"/>
    <property type="match status" value="1"/>
</dbReference>
<dbReference type="InterPro" id="IPR005882">
    <property type="entry name" value="Bifunctional_GlmU"/>
</dbReference>
<dbReference type="InterPro" id="IPR050065">
    <property type="entry name" value="GlmU-like"/>
</dbReference>
<dbReference type="InterPro" id="IPR038009">
    <property type="entry name" value="GlmU_C_LbH"/>
</dbReference>
<dbReference type="InterPro" id="IPR001451">
    <property type="entry name" value="Hexapep"/>
</dbReference>
<dbReference type="InterPro" id="IPR018357">
    <property type="entry name" value="Hexapep_transf_CS"/>
</dbReference>
<dbReference type="InterPro" id="IPR025877">
    <property type="entry name" value="MobA-like_NTP_Trfase"/>
</dbReference>
<dbReference type="InterPro" id="IPR029044">
    <property type="entry name" value="Nucleotide-diphossugar_trans"/>
</dbReference>
<dbReference type="InterPro" id="IPR011004">
    <property type="entry name" value="Trimer_LpxA-like_sf"/>
</dbReference>
<dbReference type="NCBIfam" id="TIGR01173">
    <property type="entry name" value="glmU"/>
    <property type="match status" value="1"/>
</dbReference>
<dbReference type="PANTHER" id="PTHR43584:SF3">
    <property type="entry name" value="BIFUNCTIONAL PROTEIN GLMU"/>
    <property type="match status" value="1"/>
</dbReference>
<dbReference type="PANTHER" id="PTHR43584">
    <property type="entry name" value="NUCLEOTIDYL TRANSFERASE"/>
    <property type="match status" value="1"/>
</dbReference>
<dbReference type="Pfam" id="PF00132">
    <property type="entry name" value="Hexapep"/>
    <property type="match status" value="1"/>
</dbReference>
<dbReference type="Pfam" id="PF14602">
    <property type="entry name" value="Hexapep_2"/>
    <property type="match status" value="1"/>
</dbReference>
<dbReference type="Pfam" id="PF12804">
    <property type="entry name" value="NTP_transf_3"/>
    <property type="match status" value="1"/>
</dbReference>
<dbReference type="SUPFAM" id="SSF53448">
    <property type="entry name" value="Nucleotide-diphospho-sugar transferases"/>
    <property type="match status" value="1"/>
</dbReference>
<dbReference type="SUPFAM" id="SSF51161">
    <property type="entry name" value="Trimeric LpxA-like enzymes"/>
    <property type="match status" value="1"/>
</dbReference>
<dbReference type="PROSITE" id="PS00101">
    <property type="entry name" value="HEXAPEP_TRANSFERASES"/>
    <property type="match status" value="1"/>
</dbReference>
<reference key="1">
    <citation type="journal article" date="2010" name="Appl. Environ. Microbiol.">
        <title>The genome sequence of Psychrobacter arcticus 273-4, a psychroactive Siberian permafrost bacterium, reveals mechanisms for adaptation to low-temperature growth.</title>
        <authorList>
            <person name="Ayala-del-Rio H.L."/>
            <person name="Chain P.S."/>
            <person name="Grzymski J.J."/>
            <person name="Ponder M.A."/>
            <person name="Ivanova N."/>
            <person name="Bergholz P.W."/>
            <person name="Di Bartolo G."/>
            <person name="Hauser L."/>
            <person name="Land M."/>
            <person name="Bakermans C."/>
            <person name="Rodrigues D."/>
            <person name="Klappenbach J."/>
            <person name="Zarka D."/>
            <person name="Larimer F."/>
            <person name="Richardson P."/>
            <person name="Murray A."/>
            <person name="Thomashow M."/>
            <person name="Tiedje J.M."/>
        </authorList>
    </citation>
    <scope>NUCLEOTIDE SEQUENCE [LARGE SCALE GENOMIC DNA]</scope>
    <source>
        <strain>DSM 17307 / VKM B-2377 / 273-4</strain>
    </source>
</reference>
<protein>
    <recommendedName>
        <fullName evidence="1">Bifunctional protein GlmU</fullName>
    </recommendedName>
    <domain>
        <recommendedName>
            <fullName evidence="1">UDP-N-acetylglucosamine pyrophosphorylase</fullName>
            <ecNumber evidence="1">2.7.7.23</ecNumber>
        </recommendedName>
        <alternativeName>
            <fullName evidence="1">N-acetylglucosamine-1-phosphate uridyltransferase</fullName>
        </alternativeName>
    </domain>
    <domain>
        <recommendedName>
            <fullName evidence="1">Glucosamine-1-phosphate N-acetyltransferase</fullName>
            <ecNumber evidence="1">2.3.1.157</ecNumber>
        </recommendedName>
    </domain>
</protein>
<feature type="chain" id="PRO_0000233828" description="Bifunctional protein GlmU">
    <location>
        <begin position="1"/>
        <end position="458"/>
    </location>
</feature>
<feature type="region of interest" description="Pyrophosphorylase" evidence="1">
    <location>
        <begin position="1"/>
        <end position="232"/>
    </location>
</feature>
<feature type="region of interest" description="Linker" evidence="1">
    <location>
        <begin position="233"/>
        <end position="253"/>
    </location>
</feature>
<feature type="region of interest" description="N-acetyltransferase" evidence="1">
    <location>
        <begin position="254"/>
        <end position="458"/>
    </location>
</feature>
<feature type="active site" description="Proton acceptor" evidence="1">
    <location>
        <position position="366"/>
    </location>
</feature>
<feature type="binding site" evidence="1">
    <location>
        <begin position="10"/>
        <end position="13"/>
    </location>
    <ligand>
        <name>UDP-N-acetyl-alpha-D-glucosamine</name>
        <dbReference type="ChEBI" id="CHEBI:57705"/>
    </ligand>
</feature>
<feature type="binding site" evidence="1">
    <location>
        <position position="24"/>
    </location>
    <ligand>
        <name>UDP-N-acetyl-alpha-D-glucosamine</name>
        <dbReference type="ChEBI" id="CHEBI:57705"/>
    </ligand>
</feature>
<feature type="binding site" evidence="1">
    <location>
        <position position="79"/>
    </location>
    <ligand>
        <name>UDP-N-acetyl-alpha-D-glucosamine</name>
        <dbReference type="ChEBI" id="CHEBI:57705"/>
    </ligand>
</feature>
<feature type="binding site" evidence="1">
    <location>
        <begin position="84"/>
        <end position="85"/>
    </location>
    <ligand>
        <name>UDP-N-acetyl-alpha-D-glucosamine</name>
        <dbReference type="ChEBI" id="CHEBI:57705"/>
    </ligand>
</feature>
<feature type="binding site" evidence="1">
    <location>
        <begin position="106"/>
        <end position="108"/>
    </location>
    <ligand>
        <name>UDP-N-acetyl-alpha-D-glucosamine</name>
        <dbReference type="ChEBI" id="CHEBI:57705"/>
    </ligand>
</feature>
<feature type="binding site" evidence="1">
    <location>
        <position position="108"/>
    </location>
    <ligand>
        <name>Mg(2+)</name>
        <dbReference type="ChEBI" id="CHEBI:18420"/>
    </ligand>
</feature>
<feature type="binding site" evidence="1">
    <location>
        <position position="142"/>
    </location>
    <ligand>
        <name>UDP-N-acetyl-alpha-D-glucosamine</name>
        <dbReference type="ChEBI" id="CHEBI:57705"/>
    </ligand>
</feature>
<feature type="binding site" evidence="1">
    <location>
        <position position="157"/>
    </location>
    <ligand>
        <name>UDP-N-acetyl-alpha-D-glucosamine</name>
        <dbReference type="ChEBI" id="CHEBI:57705"/>
    </ligand>
</feature>
<feature type="binding site" evidence="1">
    <location>
        <position position="172"/>
    </location>
    <ligand>
        <name>UDP-N-acetyl-alpha-D-glucosamine</name>
        <dbReference type="ChEBI" id="CHEBI:57705"/>
    </ligand>
</feature>
<feature type="binding site" evidence="1">
    <location>
        <position position="230"/>
    </location>
    <ligand>
        <name>Mg(2+)</name>
        <dbReference type="ChEBI" id="CHEBI:18420"/>
    </ligand>
</feature>
<feature type="binding site" evidence="1">
    <location>
        <position position="230"/>
    </location>
    <ligand>
        <name>UDP-N-acetyl-alpha-D-glucosamine</name>
        <dbReference type="ChEBI" id="CHEBI:57705"/>
    </ligand>
</feature>
<feature type="binding site" evidence="1">
    <location>
        <position position="336"/>
    </location>
    <ligand>
        <name>UDP-N-acetyl-alpha-D-glucosamine</name>
        <dbReference type="ChEBI" id="CHEBI:57705"/>
    </ligand>
</feature>
<feature type="binding site" evidence="1">
    <location>
        <position position="354"/>
    </location>
    <ligand>
        <name>UDP-N-acetyl-alpha-D-glucosamine</name>
        <dbReference type="ChEBI" id="CHEBI:57705"/>
    </ligand>
</feature>
<feature type="binding site" evidence="1">
    <location>
        <position position="369"/>
    </location>
    <ligand>
        <name>UDP-N-acetyl-alpha-D-glucosamine</name>
        <dbReference type="ChEBI" id="CHEBI:57705"/>
    </ligand>
</feature>
<feature type="binding site" evidence="1">
    <location>
        <position position="380"/>
    </location>
    <ligand>
        <name>UDP-N-acetyl-alpha-D-glucosamine</name>
        <dbReference type="ChEBI" id="CHEBI:57705"/>
    </ligand>
</feature>
<feature type="binding site" evidence="1">
    <location>
        <position position="383"/>
    </location>
    <ligand>
        <name>acetyl-CoA</name>
        <dbReference type="ChEBI" id="CHEBI:57288"/>
    </ligand>
</feature>
<feature type="binding site" evidence="1">
    <location>
        <begin position="389"/>
        <end position="390"/>
    </location>
    <ligand>
        <name>acetyl-CoA</name>
        <dbReference type="ChEBI" id="CHEBI:57288"/>
    </ligand>
</feature>
<feature type="binding site" evidence="1">
    <location>
        <position position="408"/>
    </location>
    <ligand>
        <name>acetyl-CoA</name>
        <dbReference type="ChEBI" id="CHEBI:57288"/>
    </ligand>
</feature>
<feature type="binding site" evidence="1">
    <location>
        <position position="426"/>
    </location>
    <ligand>
        <name>acetyl-CoA</name>
        <dbReference type="ChEBI" id="CHEBI:57288"/>
    </ligand>
</feature>
<feature type="binding site" evidence="1">
    <location>
        <position position="443"/>
    </location>
    <ligand>
        <name>acetyl-CoA</name>
        <dbReference type="ChEBI" id="CHEBI:57288"/>
    </ligand>
</feature>
<organism>
    <name type="scientific">Psychrobacter arcticus (strain DSM 17307 / VKM B-2377 / 273-4)</name>
    <dbReference type="NCBI Taxonomy" id="259536"/>
    <lineage>
        <taxon>Bacteria</taxon>
        <taxon>Pseudomonadati</taxon>
        <taxon>Pseudomonadota</taxon>
        <taxon>Gammaproteobacteria</taxon>
        <taxon>Moraxellales</taxon>
        <taxon>Moraxellaceae</taxon>
        <taxon>Psychrobacter</taxon>
    </lineage>
</organism>
<evidence type="ECO:0000255" key="1">
    <source>
        <dbReference type="HAMAP-Rule" id="MF_01631"/>
    </source>
</evidence>
<sequence>MISPLSVIILAAGKGTRMQSAKPKVLQTLAGKSLLGHVLDTCHQLTVDDTIIVHGFGGEQVQAHIAEQYAHLPITWVAQTEQLGTGHAVKVTLSDLPKEGQSLILYGDVPLVSCQTLATLQAANIYGVSMLTLTVDNPFGLGRIKRDKAGNIEAIIEQKDASSDEQQIQEINSGIYCVDNALLHKFLPKLSNDNAQQEYYLTDIVKMAVADGITIAAIEPEHTFEIEGVNNRQQLASLERTWQGKLVADLQEAGVQFADPTRVDIRGTLSVGQDVFVDVGVVFEGDCTLGDNVYIEAGCVIKNSQIGNACHIKPYCVIDEATVGAGVDIGPFAHLRPETVLSDNSKVGNFVEIKKSTIGHGSKVNHLSYIGDATVGTGVNVGAGVITCNYDGVNKSQTIIEDHAFIGSNSSLVAPVTIGDTATIAAGSVITKDVDASALAFGRARQTQKDNFQRPTKK</sequence>
<keyword id="KW-0012">Acyltransferase</keyword>
<keyword id="KW-0133">Cell shape</keyword>
<keyword id="KW-0961">Cell wall biogenesis/degradation</keyword>
<keyword id="KW-0963">Cytoplasm</keyword>
<keyword id="KW-0460">Magnesium</keyword>
<keyword id="KW-0479">Metal-binding</keyword>
<keyword id="KW-0511">Multifunctional enzyme</keyword>
<keyword id="KW-0548">Nucleotidyltransferase</keyword>
<keyword id="KW-0573">Peptidoglycan synthesis</keyword>
<keyword id="KW-1185">Reference proteome</keyword>
<keyword id="KW-0677">Repeat</keyword>
<keyword id="KW-0808">Transferase</keyword>
<name>GLMU_PSYA2</name>
<gene>
    <name evidence="1" type="primary">glmU</name>
    <name type="ordered locus">Psyc_2073</name>
</gene>